<organism>
    <name type="scientific">Treponema pallidum (strain Nichols)</name>
    <dbReference type="NCBI Taxonomy" id="243276"/>
    <lineage>
        <taxon>Bacteria</taxon>
        <taxon>Pseudomonadati</taxon>
        <taxon>Spirochaetota</taxon>
        <taxon>Spirochaetia</taxon>
        <taxon>Spirochaetales</taxon>
        <taxon>Treponemataceae</taxon>
        <taxon>Treponema</taxon>
    </lineage>
</organism>
<sequence length="84" mass="9959">MKRPERRTLVGLVTSDKMHKTVTVRITTKKLHALYKKYVSRSKKYQAHDEENTARAGDVVRIAESRPLSRRKRWRLVEIVERAK</sequence>
<accession>O83228</accession>
<feature type="chain" id="PRO_0000128494" description="Small ribosomal subunit protein uS17">
    <location>
        <begin position="1"/>
        <end position="84"/>
    </location>
</feature>
<evidence type="ECO:0000255" key="1">
    <source>
        <dbReference type="HAMAP-Rule" id="MF_01345"/>
    </source>
</evidence>
<evidence type="ECO:0000305" key="2"/>
<protein>
    <recommendedName>
        <fullName evidence="1">Small ribosomal subunit protein uS17</fullName>
    </recommendedName>
    <alternativeName>
        <fullName evidence="2">30S ribosomal protein S17</fullName>
    </alternativeName>
</protein>
<dbReference type="EMBL" id="AE000520">
    <property type="protein sequence ID" value="AAC65183.1"/>
    <property type="molecule type" value="Genomic_DNA"/>
</dbReference>
<dbReference type="PIR" id="H71355">
    <property type="entry name" value="H71355"/>
</dbReference>
<dbReference type="SMR" id="O83228"/>
<dbReference type="IntAct" id="O83228">
    <property type="interactions" value="1"/>
</dbReference>
<dbReference type="STRING" id="243276.TP_0198"/>
<dbReference type="EnsemblBacteria" id="AAC65183">
    <property type="protein sequence ID" value="AAC65183"/>
    <property type="gene ID" value="TP_0198"/>
</dbReference>
<dbReference type="KEGG" id="tpa:TP_0198"/>
<dbReference type="KEGG" id="tpw:TPANIC_0198"/>
<dbReference type="eggNOG" id="COG0186">
    <property type="taxonomic scope" value="Bacteria"/>
</dbReference>
<dbReference type="HOGENOM" id="CLU_073626_1_2_12"/>
<dbReference type="OrthoDB" id="9811714at2"/>
<dbReference type="Proteomes" id="UP000000811">
    <property type="component" value="Chromosome"/>
</dbReference>
<dbReference type="GO" id="GO:0022627">
    <property type="term" value="C:cytosolic small ribosomal subunit"/>
    <property type="evidence" value="ECO:0007669"/>
    <property type="project" value="TreeGrafter"/>
</dbReference>
<dbReference type="GO" id="GO:0019843">
    <property type="term" value="F:rRNA binding"/>
    <property type="evidence" value="ECO:0007669"/>
    <property type="project" value="UniProtKB-UniRule"/>
</dbReference>
<dbReference type="GO" id="GO:0003735">
    <property type="term" value="F:structural constituent of ribosome"/>
    <property type="evidence" value="ECO:0007669"/>
    <property type="project" value="InterPro"/>
</dbReference>
<dbReference type="GO" id="GO:0006412">
    <property type="term" value="P:translation"/>
    <property type="evidence" value="ECO:0007669"/>
    <property type="project" value="UniProtKB-UniRule"/>
</dbReference>
<dbReference type="CDD" id="cd00364">
    <property type="entry name" value="Ribosomal_uS17"/>
    <property type="match status" value="1"/>
</dbReference>
<dbReference type="Gene3D" id="2.40.50.140">
    <property type="entry name" value="Nucleic acid-binding proteins"/>
    <property type="match status" value="1"/>
</dbReference>
<dbReference type="HAMAP" id="MF_01345_B">
    <property type="entry name" value="Ribosomal_uS17_B"/>
    <property type="match status" value="1"/>
</dbReference>
<dbReference type="InterPro" id="IPR012340">
    <property type="entry name" value="NA-bd_OB-fold"/>
</dbReference>
<dbReference type="InterPro" id="IPR000266">
    <property type="entry name" value="Ribosomal_uS17"/>
</dbReference>
<dbReference type="InterPro" id="IPR019984">
    <property type="entry name" value="Ribosomal_uS17_bact/chlr"/>
</dbReference>
<dbReference type="InterPro" id="IPR019979">
    <property type="entry name" value="Ribosomal_uS17_CS"/>
</dbReference>
<dbReference type="NCBIfam" id="NF004123">
    <property type="entry name" value="PRK05610.1"/>
    <property type="match status" value="1"/>
</dbReference>
<dbReference type="NCBIfam" id="TIGR03635">
    <property type="entry name" value="uS17_bact"/>
    <property type="match status" value="1"/>
</dbReference>
<dbReference type="PANTHER" id="PTHR10744">
    <property type="entry name" value="40S RIBOSOMAL PROTEIN S11 FAMILY MEMBER"/>
    <property type="match status" value="1"/>
</dbReference>
<dbReference type="PANTHER" id="PTHR10744:SF1">
    <property type="entry name" value="SMALL RIBOSOMAL SUBUNIT PROTEIN US17M"/>
    <property type="match status" value="1"/>
</dbReference>
<dbReference type="Pfam" id="PF00366">
    <property type="entry name" value="Ribosomal_S17"/>
    <property type="match status" value="1"/>
</dbReference>
<dbReference type="PRINTS" id="PR00973">
    <property type="entry name" value="RIBOSOMALS17"/>
</dbReference>
<dbReference type="SUPFAM" id="SSF50249">
    <property type="entry name" value="Nucleic acid-binding proteins"/>
    <property type="match status" value="1"/>
</dbReference>
<dbReference type="PROSITE" id="PS00056">
    <property type="entry name" value="RIBOSOMAL_S17"/>
    <property type="match status" value="1"/>
</dbReference>
<keyword id="KW-1185">Reference proteome</keyword>
<keyword id="KW-0687">Ribonucleoprotein</keyword>
<keyword id="KW-0689">Ribosomal protein</keyword>
<keyword id="KW-0694">RNA-binding</keyword>
<keyword id="KW-0699">rRNA-binding</keyword>
<comment type="function">
    <text evidence="1">One of the primary rRNA binding proteins, it binds specifically to the 5'-end of 16S ribosomal RNA.</text>
</comment>
<comment type="subunit">
    <text evidence="1">Part of the 30S ribosomal subunit.</text>
</comment>
<comment type="similarity">
    <text evidence="1">Belongs to the universal ribosomal protein uS17 family.</text>
</comment>
<reference key="1">
    <citation type="journal article" date="1998" name="Science">
        <title>Complete genome sequence of Treponema pallidum, the syphilis spirochete.</title>
        <authorList>
            <person name="Fraser C.M."/>
            <person name="Norris S.J."/>
            <person name="Weinstock G.M."/>
            <person name="White O."/>
            <person name="Sutton G.G."/>
            <person name="Dodson R.J."/>
            <person name="Gwinn M.L."/>
            <person name="Hickey E.K."/>
            <person name="Clayton R.A."/>
            <person name="Ketchum K.A."/>
            <person name="Sodergren E."/>
            <person name="Hardham J.M."/>
            <person name="McLeod M.P."/>
            <person name="Salzberg S.L."/>
            <person name="Peterson J.D."/>
            <person name="Khalak H.G."/>
            <person name="Richardson D.L."/>
            <person name="Howell J.K."/>
            <person name="Chidambaram M."/>
            <person name="Utterback T.R."/>
            <person name="McDonald L.A."/>
            <person name="Artiach P."/>
            <person name="Bowman C."/>
            <person name="Cotton M.D."/>
            <person name="Fujii C."/>
            <person name="Garland S.A."/>
            <person name="Hatch B."/>
            <person name="Horst K."/>
            <person name="Roberts K.M."/>
            <person name="Sandusky M."/>
            <person name="Weidman J.F."/>
            <person name="Smith H.O."/>
            <person name="Venter J.C."/>
        </authorList>
    </citation>
    <scope>NUCLEOTIDE SEQUENCE [LARGE SCALE GENOMIC DNA]</scope>
    <source>
        <strain>Nichols</strain>
    </source>
</reference>
<name>RS17_TREPA</name>
<gene>
    <name evidence="1" type="primary">rpsQ</name>
    <name type="ordered locus">TP_0198</name>
</gene>
<proteinExistence type="inferred from homology"/>